<gene>
    <name type="primary">captB</name>
    <name type="ORF">DDB_G0278947</name>
</gene>
<reference key="1">
    <citation type="journal article" date="2005" name="Nature">
        <title>The genome of the social amoeba Dictyostelium discoideum.</title>
        <authorList>
            <person name="Eichinger L."/>
            <person name="Pachebat J.A."/>
            <person name="Gloeckner G."/>
            <person name="Rajandream M.A."/>
            <person name="Sucgang R."/>
            <person name="Berriman M."/>
            <person name="Song J."/>
            <person name="Olsen R."/>
            <person name="Szafranski K."/>
            <person name="Xu Q."/>
            <person name="Tunggal B."/>
            <person name="Kummerfeld S."/>
            <person name="Madera M."/>
            <person name="Konfortov B.A."/>
            <person name="Rivero F."/>
            <person name="Bankier A.T."/>
            <person name="Lehmann R."/>
            <person name="Hamlin N."/>
            <person name="Davies R."/>
            <person name="Gaudet P."/>
            <person name="Fey P."/>
            <person name="Pilcher K."/>
            <person name="Chen G."/>
            <person name="Saunders D."/>
            <person name="Sodergren E.J."/>
            <person name="Davis P."/>
            <person name="Kerhornou A."/>
            <person name="Nie X."/>
            <person name="Hall N."/>
            <person name="Anjard C."/>
            <person name="Hemphill L."/>
            <person name="Bason N."/>
            <person name="Farbrother P."/>
            <person name="Desany B."/>
            <person name="Just E."/>
            <person name="Morio T."/>
            <person name="Rost R."/>
            <person name="Churcher C.M."/>
            <person name="Cooper J."/>
            <person name="Haydock S."/>
            <person name="van Driessche N."/>
            <person name="Cronin A."/>
            <person name="Goodhead I."/>
            <person name="Muzny D.M."/>
            <person name="Mourier T."/>
            <person name="Pain A."/>
            <person name="Lu M."/>
            <person name="Harper D."/>
            <person name="Lindsay R."/>
            <person name="Hauser H."/>
            <person name="James K.D."/>
            <person name="Quiles M."/>
            <person name="Madan Babu M."/>
            <person name="Saito T."/>
            <person name="Buchrieser C."/>
            <person name="Wardroper A."/>
            <person name="Felder M."/>
            <person name="Thangavelu M."/>
            <person name="Johnson D."/>
            <person name="Knights A."/>
            <person name="Loulseged H."/>
            <person name="Mungall K.L."/>
            <person name="Oliver K."/>
            <person name="Price C."/>
            <person name="Quail M.A."/>
            <person name="Urushihara H."/>
            <person name="Hernandez J."/>
            <person name="Rabbinowitsch E."/>
            <person name="Steffen D."/>
            <person name="Sanders M."/>
            <person name="Ma J."/>
            <person name="Kohara Y."/>
            <person name="Sharp S."/>
            <person name="Simmonds M.N."/>
            <person name="Spiegler S."/>
            <person name="Tivey A."/>
            <person name="Sugano S."/>
            <person name="White B."/>
            <person name="Walker D."/>
            <person name="Woodward J.R."/>
            <person name="Winckler T."/>
            <person name="Tanaka Y."/>
            <person name="Shaulsky G."/>
            <person name="Schleicher M."/>
            <person name="Weinstock G.M."/>
            <person name="Rosenthal A."/>
            <person name="Cox E.C."/>
            <person name="Chisholm R.L."/>
            <person name="Gibbs R.A."/>
            <person name="Loomis W.F."/>
            <person name="Platzer M."/>
            <person name="Kay R.R."/>
            <person name="Williams J.G."/>
            <person name="Dear P.H."/>
            <person name="Noegel A.A."/>
            <person name="Barrell B.G."/>
            <person name="Kuspa A."/>
        </authorList>
    </citation>
    <scope>NUCLEOTIDE SEQUENCE [LARGE SCALE GENOMIC DNA]</scope>
    <source>
        <strain>AX4</strain>
    </source>
</reference>
<keyword id="KW-0472">Membrane</keyword>
<keyword id="KW-1185">Reference proteome</keyword>
<keyword id="KW-0808">Transferase</keyword>
<keyword id="KW-0812">Transmembrane</keyword>
<keyword id="KW-1133">Transmembrane helix</keyword>
<evidence type="ECO:0000255" key="1"/>
<evidence type="ECO:0000256" key="2">
    <source>
        <dbReference type="SAM" id="MobiDB-lite"/>
    </source>
</evidence>
<evidence type="ECO:0000305" key="3"/>
<name>CAPTB_DICDI</name>
<comment type="subcellular location">
    <subcellularLocation>
        <location evidence="3">Membrane</location>
        <topology evidence="3">Multi-pass membrane protein</topology>
    </subcellularLocation>
</comment>
<comment type="similarity">
    <text evidence="3">Belongs to the CDP-alcohol phosphatidyltransferase class-I family.</text>
</comment>
<protein>
    <recommendedName>
        <fullName>Uncharacterized CDP-alcohol phosphatidyltransferase class-I family protein 2</fullName>
    </recommendedName>
</protein>
<sequence length="409" mass="46188">MSKYFKYISEKGITNLANYHYSGVDNSFCGNKFLKHWWNYCVNFTPLWLAPNIITLVGLLCNIGMYLIMYVHCPTLTEEAPRWCYFAVAFLIFAYQTLDNVDGKQARKTKSSSPLGELFDHVCDALSVAMFAIVMSATLRIGPYWTFFSFIVGMWPFYLAHWEEYHAGILVMGEFNGPTEAQVLFMIIEIITGIFGSDIWTYGTSTTVGKIATVFVSIGAVVTCLQNFTNTYKLENRMTFGKCLLQLTPICLFTALIVIWASVSNLITEQPHLFIMTLGILFGYIQSRYITQRVCHDDCSLFYPIFVPIIIVVLNSILASSDVHLVSETVALWILFSIACAQFLLFSYFTTQQLCDHLKIKVFTIPYPSNSGIGPSQEYENSLLSQMEEGSSSIGNSTDDINPSEIEEI</sequence>
<proteinExistence type="inferred from homology"/>
<accession>Q54XM0</accession>
<organism>
    <name type="scientific">Dictyostelium discoideum</name>
    <name type="common">Social amoeba</name>
    <dbReference type="NCBI Taxonomy" id="44689"/>
    <lineage>
        <taxon>Eukaryota</taxon>
        <taxon>Amoebozoa</taxon>
        <taxon>Evosea</taxon>
        <taxon>Eumycetozoa</taxon>
        <taxon>Dictyostelia</taxon>
        <taxon>Dictyosteliales</taxon>
        <taxon>Dictyosteliaceae</taxon>
        <taxon>Dictyostelium</taxon>
    </lineage>
</organism>
<feature type="chain" id="PRO_0000328508" description="Uncharacterized CDP-alcohol phosphatidyltransferase class-I family protein 2">
    <location>
        <begin position="1"/>
        <end position="409"/>
    </location>
</feature>
<feature type="transmembrane region" description="Helical" evidence="1">
    <location>
        <begin position="53"/>
        <end position="73"/>
    </location>
</feature>
<feature type="transmembrane region" description="Helical" evidence="1">
    <location>
        <begin position="83"/>
        <end position="103"/>
    </location>
</feature>
<feature type="transmembrane region" description="Helical" evidence="1">
    <location>
        <begin position="115"/>
        <end position="135"/>
    </location>
</feature>
<feature type="transmembrane region" description="Helical" evidence="1">
    <location>
        <begin position="141"/>
        <end position="161"/>
    </location>
</feature>
<feature type="transmembrane region" description="Helical" evidence="1">
    <location>
        <begin position="183"/>
        <end position="203"/>
    </location>
</feature>
<feature type="transmembrane region" description="Helical" evidence="1">
    <location>
        <begin position="205"/>
        <end position="225"/>
    </location>
</feature>
<feature type="transmembrane region" description="Helical" evidence="1">
    <location>
        <begin position="243"/>
        <end position="263"/>
    </location>
</feature>
<feature type="transmembrane region" description="Helical" evidence="1">
    <location>
        <begin position="265"/>
        <end position="285"/>
    </location>
</feature>
<feature type="transmembrane region" description="Helical" evidence="1">
    <location>
        <begin position="299"/>
        <end position="319"/>
    </location>
</feature>
<feature type="transmembrane region" description="Helical" evidence="1">
    <location>
        <begin position="329"/>
        <end position="349"/>
    </location>
</feature>
<feature type="region of interest" description="Disordered" evidence="2">
    <location>
        <begin position="388"/>
        <end position="409"/>
    </location>
</feature>
<feature type="compositionally biased region" description="Polar residues" evidence="2">
    <location>
        <begin position="388"/>
        <end position="401"/>
    </location>
</feature>
<dbReference type="EMBL" id="AAFI02000024">
    <property type="protein sequence ID" value="EAL68075.1"/>
    <property type="molecule type" value="Genomic_DNA"/>
</dbReference>
<dbReference type="RefSeq" id="XP_647783.1">
    <property type="nucleotide sequence ID" value="XM_642691.1"/>
</dbReference>
<dbReference type="SMR" id="Q54XM0"/>
<dbReference type="FunCoup" id="Q54XM0">
    <property type="interactions" value="53"/>
</dbReference>
<dbReference type="STRING" id="44689.Q54XM0"/>
<dbReference type="PaxDb" id="44689-DDB0266710"/>
<dbReference type="EnsemblProtists" id="EAL68075">
    <property type="protein sequence ID" value="EAL68075"/>
    <property type="gene ID" value="DDB_G0278947"/>
</dbReference>
<dbReference type="GeneID" id="8621742"/>
<dbReference type="KEGG" id="ddi:DDB_G0278947"/>
<dbReference type="dictyBase" id="DDB_G0278947">
    <property type="gene designation" value="captB"/>
</dbReference>
<dbReference type="VEuPathDB" id="AmoebaDB:DDB_G0278947"/>
<dbReference type="eggNOG" id="KOG2877">
    <property type="taxonomic scope" value="Eukaryota"/>
</dbReference>
<dbReference type="HOGENOM" id="CLU_035066_0_1_1"/>
<dbReference type="InParanoid" id="Q54XM0"/>
<dbReference type="OMA" id="REFISCH"/>
<dbReference type="PhylomeDB" id="Q54XM0"/>
<dbReference type="Reactome" id="R-DDI-1483191">
    <property type="pathway name" value="Synthesis of PC"/>
</dbReference>
<dbReference type="Reactome" id="R-DDI-1483213">
    <property type="pathway name" value="Synthesis of PE"/>
</dbReference>
<dbReference type="PRO" id="PR:Q54XM0"/>
<dbReference type="Proteomes" id="UP000002195">
    <property type="component" value="Chromosome 3"/>
</dbReference>
<dbReference type="GO" id="GO:0016020">
    <property type="term" value="C:membrane"/>
    <property type="evidence" value="ECO:0007669"/>
    <property type="project" value="UniProtKB-SubCell"/>
</dbReference>
<dbReference type="GO" id="GO:0016780">
    <property type="term" value="F:phosphotransferase activity, for other substituted phosphate groups"/>
    <property type="evidence" value="ECO:0007669"/>
    <property type="project" value="InterPro"/>
</dbReference>
<dbReference type="GO" id="GO:0008654">
    <property type="term" value="P:phospholipid biosynthetic process"/>
    <property type="evidence" value="ECO:0007669"/>
    <property type="project" value="InterPro"/>
</dbReference>
<dbReference type="FunFam" id="1.20.120.1760:FF:000002">
    <property type="entry name" value="Choline/ethanolamine phosphotransferase 1"/>
    <property type="match status" value="1"/>
</dbReference>
<dbReference type="Gene3D" id="1.20.120.1760">
    <property type="match status" value="1"/>
</dbReference>
<dbReference type="InterPro" id="IPR000462">
    <property type="entry name" value="CDP-OH_P_trans"/>
</dbReference>
<dbReference type="InterPro" id="IPR043130">
    <property type="entry name" value="CDP-OH_PTrfase_TM_dom"/>
</dbReference>
<dbReference type="InterPro" id="IPR048254">
    <property type="entry name" value="CDP_ALCOHOL_P_TRANSF_CS"/>
</dbReference>
<dbReference type="InterPro" id="IPR014472">
    <property type="entry name" value="CHOPT"/>
</dbReference>
<dbReference type="PANTHER" id="PTHR10414:SF75">
    <property type="entry name" value="CDP-ALCOHOL PHOSPHATIDYLTRANSFERASE"/>
    <property type="match status" value="1"/>
</dbReference>
<dbReference type="PANTHER" id="PTHR10414">
    <property type="entry name" value="ETHANOLAMINEPHOSPHOTRANSFERASE"/>
    <property type="match status" value="1"/>
</dbReference>
<dbReference type="Pfam" id="PF01066">
    <property type="entry name" value="CDP-OH_P_transf"/>
    <property type="match status" value="1"/>
</dbReference>
<dbReference type="PIRSF" id="PIRSF015665">
    <property type="entry name" value="CHOPT"/>
    <property type="match status" value="1"/>
</dbReference>
<dbReference type="PROSITE" id="PS00379">
    <property type="entry name" value="CDP_ALCOHOL_P_TRANSF"/>
    <property type="match status" value="1"/>
</dbReference>